<accession>Q7N5J7</accession>
<name>FLIT_PHOLL</name>
<organism>
    <name type="scientific">Photorhabdus laumondii subsp. laumondii (strain DSM 15139 / CIP 105565 / TT01)</name>
    <name type="common">Photorhabdus luminescens subsp. laumondii</name>
    <dbReference type="NCBI Taxonomy" id="243265"/>
    <lineage>
        <taxon>Bacteria</taxon>
        <taxon>Pseudomonadati</taxon>
        <taxon>Pseudomonadota</taxon>
        <taxon>Gammaproteobacteria</taxon>
        <taxon>Enterobacterales</taxon>
        <taxon>Morganellaceae</taxon>
        <taxon>Photorhabdus</taxon>
    </lineage>
</organism>
<reference key="1">
    <citation type="journal article" date="2003" name="Nat. Biotechnol.">
        <title>The genome sequence of the entomopathogenic bacterium Photorhabdus luminescens.</title>
        <authorList>
            <person name="Duchaud E."/>
            <person name="Rusniok C."/>
            <person name="Frangeul L."/>
            <person name="Buchrieser C."/>
            <person name="Givaudan A."/>
            <person name="Taourit S."/>
            <person name="Bocs S."/>
            <person name="Boursaux-Eude C."/>
            <person name="Chandler M."/>
            <person name="Charles J.-F."/>
            <person name="Dassa E."/>
            <person name="Derose R."/>
            <person name="Derzelle S."/>
            <person name="Freyssinet G."/>
            <person name="Gaudriault S."/>
            <person name="Medigue C."/>
            <person name="Lanois A."/>
            <person name="Powell K."/>
            <person name="Siguier P."/>
            <person name="Vincent R."/>
            <person name="Wingate V."/>
            <person name="Zouine M."/>
            <person name="Glaser P."/>
            <person name="Boemare N."/>
            <person name="Danchin A."/>
            <person name="Kunst F."/>
        </authorList>
    </citation>
    <scope>NUCLEOTIDE SEQUENCE [LARGE SCALE GENOMIC DNA]</scope>
    <source>
        <strain>DSM 15139 / CIP 105565 / TT01</strain>
    </source>
</reference>
<comment type="function">
    <text evidence="1">Dual-function protein that regulates the transcription of class 2 flagellar operons and that also acts as an export chaperone for the filament-capping protein FliD. As a transcriptional regulator, acts as an anti-FlhDC factor; it directly binds FlhC, thus inhibiting the binding of the FlhC/FlhD complex to class 2 promoters, resulting in decreased expression of class 2 flagellar operons. As a chaperone, effects FliD transition to the membrane by preventing its premature polymerization, and by directing it to the export apparatus.</text>
</comment>
<comment type="subunit">
    <text evidence="1">Homodimer. Interacts with FliD and FlhC.</text>
</comment>
<comment type="subcellular location">
    <subcellularLocation>
        <location evidence="1">Cytoplasm</location>
        <location evidence="1">Cytosol</location>
    </subcellularLocation>
</comment>
<comment type="similarity">
    <text evidence="1">Belongs to the FliT family.</text>
</comment>
<sequence>MDNKMDLLSAYQRILSLSEQMLNLAKNEKWDELVDMEITYLKAVEVISHSSISSTTSLSLQQKMTNILQIILDNENEIKKLLQKRLDELSKLIKQASQQQLLNDSYGQFPVEPYHNTLMNSTEQK</sequence>
<protein>
    <recommendedName>
        <fullName evidence="1">Flagellar protein FliT</fullName>
    </recommendedName>
</protein>
<feature type="chain" id="PRO_0000353886" description="Flagellar protein FliT">
    <location>
        <begin position="1"/>
        <end position="125"/>
    </location>
</feature>
<feature type="region of interest" description="Required for homodimerization" evidence="1">
    <location>
        <begin position="1"/>
        <end position="50"/>
    </location>
</feature>
<feature type="region of interest" description="FliD binding" evidence="1">
    <location>
        <begin position="60"/>
        <end position="98"/>
    </location>
</feature>
<proteinExistence type="inferred from homology"/>
<keyword id="KW-1005">Bacterial flagellum biogenesis</keyword>
<keyword id="KW-0143">Chaperone</keyword>
<keyword id="KW-0963">Cytoplasm</keyword>
<keyword id="KW-1185">Reference proteome</keyword>
<keyword id="KW-0678">Repressor</keyword>
<keyword id="KW-0804">Transcription</keyword>
<keyword id="KW-0805">Transcription regulation</keyword>
<dbReference type="EMBL" id="BX571865">
    <property type="protein sequence ID" value="CAE14244.1"/>
    <property type="molecule type" value="Genomic_DNA"/>
</dbReference>
<dbReference type="RefSeq" id="WP_011146213.1">
    <property type="nucleotide sequence ID" value="NC_005126.1"/>
</dbReference>
<dbReference type="SMR" id="Q7N5J7"/>
<dbReference type="STRING" id="243265.plu1951"/>
<dbReference type="GeneID" id="48848224"/>
<dbReference type="KEGG" id="plu:plu1951"/>
<dbReference type="eggNOG" id="ENOG5032ZV7">
    <property type="taxonomic scope" value="Bacteria"/>
</dbReference>
<dbReference type="HOGENOM" id="CLU_155793_1_0_6"/>
<dbReference type="OrthoDB" id="6494117at2"/>
<dbReference type="Proteomes" id="UP000002514">
    <property type="component" value="Chromosome"/>
</dbReference>
<dbReference type="GO" id="GO:0005829">
    <property type="term" value="C:cytosol"/>
    <property type="evidence" value="ECO:0007669"/>
    <property type="project" value="UniProtKB-SubCell"/>
</dbReference>
<dbReference type="GO" id="GO:0044781">
    <property type="term" value="P:bacterial-type flagellum organization"/>
    <property type="evidence" value="ECO:0007669"/>
    <property type="project" value="UniProtKB-KW"/>
</dbReference>
<dbReference type="GO" id="GO:1902209">
    <property type="term" value="P:negative regulation of bacterial-type flagellum assembly"/>
    <property type="evidence" value="ECO:0007669"/>
    <property type="project" value="UniProtKB-UniRule"/>
</dbReference>
<dbReference type="GO" id="GO:0006457">
    <property type="term" value="P:protein folding"/>
    <property type="evidence" value="ECO:0007669"/>
    <property type="project" value="UniProtKB-UniRule"/>
</dbReference>
<dbReference type="Gene3D" id="1.20.58.380">
    <property type="entry name" value="Flagellar protein flit"/>
    <property type="match status" value="1"/>
</dbReference>
<dbReference type="HAMAP" id="MF_01180">
    <property type="entry name" value="FliT"/>
    <property type="match status" value="1"/>
</dbReference>
<dbReference type="InterPro" id="IPR008622">
    <property type="entry name" value="FliT"/>
</dbReference>
<dbReference type="NCBIfam" id="NF007836">
    <property type="entry name" value="PRK10548.1"/>
    <property type="match status" value="1"/>
</dbReference>
<dbReference type="Pfam" id="PF05400">
    <property type="entry name" value="FliT"/>
    <property type="match status" value="1"/>
</dbReference>
<gene>
    <name evidence="1" type="primary">fliT</name>
    <name type="ordered locus">plu1951</name>
</gene>
<evidence type="ECO:0000255" key="1">
    <source>
        <dbReference type="HAMAP-Rule" id="MF_01180"/>
    </source>
</evidence>